<organism>
    <name type="scientific">Nicotiana tomentosiformis</name>
    <name type="common">Tobacco</name>
    <dbReference type="NCBI Taxonomy" id="4098"/>
    <lineage>
        <taxon>Eukaryota</taxon>
        <taxon>Viridiplantae</taxon>
        <taxon>Streptophyta</taxon>
        <taxon>Embryophyta</taxon>
        <taxon>Tracheophyta</taxon>
        <taxon>Spermatophyta</taxon>
        <taxon>Magnoliopsida</taxon>
        <taxon>eudicotyledons</taxon>
        <taxon>Gunneridae</taxon>
        <taxon>Pentapetalae</taxon>
        <taxon>asterids</taxon>
        <taxon>lamiids</taxon>
        <taxon>Solanales</taxon>
        <taxon>Solanaceae</taxon>
        <taxon>Nicotianoideae</taxon>
        <taxon>Nicotianeae</taxon>
        <taxon>Nicotiana</taxon>
    </lineage>
</organism>
<reference key="1">
    <citation type="journal article" date="2007" name="J. Biol. Chem.">
        <title>Functional analysis of nicotine demethylase genes reveals insights into the evolution of modern tobacco.</title>
        <authorList>
            <person name="Gavilano L.B."/>
            <person name="Coleman N.P."/>
            <person name="Bowen S.W."/>
            <person name="Siminszky B."/>
        </authorList>
    </citation>
    <scope>NUCLEOTIDE SEQUENCE [GENOMIC DNA]</scope>
    <scope>FUNCTION</scope>
    <scope>CATALYTIC ACTIVITY</scope>
    <scope>PATHWAY</scope>
    <scope>BIOPHYSICOCHEMICAL PROPERTIES</scope>
    <scope>TISSUE SPECIFICITY</scope>
    <scope>DEVELOPMENTAL STAGE</scope>
</reference>
<evidence type="ECO:0000250" key="1">
    <source>
        <dbReference type="UniProtKB" id="P04798"/>
    </source>
</evidence>
<evidence type="ECO:0000250" key="2">
    <source>
        <dbReference type="UniProtKB" id="Q9SZU1"/>
    </source>
</evidence>
<evidence type="ECO:0000255" key="3"/>
<evidence type="ECO:0000269" key="4">
    <source>
    </source>
</evidence>
<evidence type="ECO:0000303" key="5">
    <source>
    </source>
</evidence>
<evidence type="ECO:0000305" key="6"/>
<dbReference type="EC" id="1.14.14.-" evidence="4"/>
<dbReference type="EMBL" id="EF042306">
    <property type="protein sequence ID" value="ABM46919.1"/>
    <property type="molecule type" value="Genomic_DNA"/>
</dbReference>
<dbReference type="SMR" id="A1YJE2"/>
<dbReference type="GeneID" id="104103346"/>
<dbReference type="KEGG" id="nto:104103346"/>
<dbReference type="OrthoDB" id="1055148at2759"/>
<dbReference type="BRENDA" id="1.14.14.B11">
    <property type="organism ID" value="3648"/>
</dbReference>
<dbReference type="UniPathway" id="UPA00107"/>
<dbReference type="GO" id="GO:0016020">
    <property type="term" value="C:membrane"/>
    <property type="evidence" value="ECO:0007669"/>
    <property type="project" value="UniProtKB-SubCell"/>
</dbReference>
<dbReference type="GO" id="GO:0020037">
    <property type="term" value="F:heme binding"/>
    <property type="evidence" value="ECO:0007669"/>
    <property type="project" value="InterPro"/>
</dbReference>
<dbReference type="GO" id="GO:0005506">
    <property type="term" value="F:iron ion binding"/>
    <property type="evidence" value="ECO:0007669"/>
    <property type="project" value="InterPro"/>
</dbReference>
<dbReference type="GO" id="GO:0004497">
    <property type="term" value="F:monooxygenase activity"/>
    <property type="evidence" value="ECO:0007669"/>
    <property type="project" value="UniProtKB-KW"/>
</dbReference>
<dbReference type="GO" id="GO:0016705">
    <property type="term" value="F:oxidoreductase activity, acting on paired donors, with incorporation or reduction of molecular oxygen"/>
    <property type="evidence" value="ECO:0007669"/>
    <property type="project" value="InterPro"/>
</dbReference>
<dbReference type="GO" id="GO:0009820">
    <property type="term" value="P:alkaloid metabolic process"/>
    <property type="evidence" value="ECO:0007669"/>
    <property type="project" value="UniProtKB-KW"/>
</dbReference>
<dbReference type="GO" id="GO:0042179">
    <property type="term" value="P:nicotine biosynthetic process"/>
    <property type="evidence" value="ECO:0007669"/>
    <property type="project" value="UniProtKB-UniPathway"/>
</dbReference>
<dbReference type="FunFam" id="1.10.630.10:FF:000026">
    <property type="entry name" value="Cytochrome P450 82C4"/>
    <property type="match status" value="1"/>
</dbReference>
<dbReference type="Gene3D" id="1.10.630.10">
    <property type="entry name" value="Cytochrome P450"/>
    <property type="match status" value="1"/>
</dbReference>
<dbReference type="InterPro" id="IPR001128">
    <property type="entry name" value="Cyt_P450"/>
</dbReference>
<dbReference type="InterPro" id="IPR017972">
    <property type="entry name" value="Cyt_P450_CS"/>
</dbReference>
<dbReference type="InterPro" id="IPR002401">
    <property type="entry name" value="Cyt_P450_E_grp-I"/>
</dbReference>
<dbReference type="InterPro" id="IPR036396">
    <property type="entry name" value="Cyt_P450_sf"/>
</dbReference>
<dbReference type="InterPro" id="IPR050651">
    <property type="entry name" value="Plant_Cytochrome_P450_Monoox"/>
</dbReference>
<dbReference type="PANTHER" id="PTHR47947">
    <property type="entry name" value="CYTOCHROME P450 82C3-RELATED"/>
    <property type="match status" value="1"/>
</dbReference>
<dbReference type="PANTHER" id="PTHR47947:SF1">
    <property type="entry name" value="CYTOCHROME P450 82E3"/>
    <property type="match status" value="1"/>
</dbReference>
<dbReference type="Pfam" id="PF00067">
    <property type="entry name" value="p450"/>
    <property type="match status" value="1"/>
</dbReference>
<dbReference type="PRINTS" id="PR00463">
    <property type="entry name" value="EP450I"/>
</dbReference>
<dbReference type="PRINTS" id="PR00385">
    <property type="entry name" value="P450"/>
</dbReference>
<dbReference type="SUPFAM" id="SSF48264">
    <property type="entry name" value="Cytochrome P450"/>
    <property type="match status" value="1"/>
</dbReference>
<dbReference type="PROSITE" id="PS00086">
    <property type="entry name" value="CYTOCHROME_P450"/>
    <property type="match status" value="1"/>
</dbReference>
<accession>A1YJE2</accession>
<sequence>MVFPVEAIVGLVTFTFLFYFLWTKKSQKPSKPLPPKIPGGWPVIGHLFYFDDDGDDRPLARKLGDLADKYGPVFTFRLGLPLVLVVSSYEAIKDCFSTNDAIFSNRPAFLYGEYLGYNNAMLFLANYGSYWRKNRKLIIQEVLSASRLEKFKHVRFARIQTSIKNLYTRIDGNSSTINLTDWLEELNFGLIVKMIAGKNYESGKGDEQVERFKKAFKDFMILSMEFVLWDAFPIPLFKWVDFQGHVKAMKRTFKDIDSVFQNWLEEHIKKREKIMEVGTEGNEQDFIDVVLSKMSNEYLGEGYSRDTVIKATVFSLVLDAADTVALHINWGMALLINNQNALKKAQEEIDTKVGKDRWVEESDIKDLVYLQAIVKEVLRLYPPGPLLVPHENVEDCVVSGYHIPKGTRLFANVMKLQRDPKLWSNPDKFNPERFIARDIDFHGQHYEYIPFGSGRRSCPGMTYALQVEHLTMAHLIQGFNYRTPTDEPLDMKEGAGITIRKVNPVKVIITPRLAPELY</sequence>
<gene>
    <name evidence="5" type="primary">CYP82E3</name>
</gene>
<name>C82E3_NICTO</name>
<proteinExistence type="evidence at protein level"/>
<keyword id="KW-0017">Alkaloid metabolism</keyword>
<keyword id="KW-0349">Heme</keyword>
<keyword id="KW-0408">Iron</keyword>
<keyword id="KW-1017">Isopeptide bond</keyword>
<keyword id="KW-0472">Membrane</keyword>
<keyword id="KW-0479">Metal-binding</keyword>
<keyword id="KW-0503">Monooxygenase</keyword>
<keyword id="KW-0560">Oxidoreductase</keyword>
<keyword id="KW-0812">Transmembrane</keyword>
<keyword id="KW-1133">Transmembrane helix</keyword>
<keyword id="KW-0832">Ubl conjugation</keyword>
<feature type="chain" id="PRO_0000455784" description="Nicotine N-demethylase CYP82E3">
    <location>
        <begin position="1"/>
        <end position="518"/>
    </location>
</feature>
<feature type="transmembrane region" description="Helical" evidence="3">
    <location>
        <begin position="2"/>
        <end position="22"/>
    </location>
</feature>
<feature type="binding site" description="axial binding residue" evidence="1">
    <location>
        <position position="458"/>
    </location>
    <ligand>
        <name>heme</name>
        <dbReference type="ChEBI" id="CHEBI:30413"/>
    </ligand>
    <ligandPart>
        <name>Fe</name>
        <dbReference type="ChEBI" id="CHEBI:18248"/>
    </ligandPart>
</feature>
<feature type="cross-link" description="Glycyl lysine isopeptide (Lys-Gly) (interchain with G-Cter in ubiquitin)" evidence="2">
    <location>
        <position position="254"/>
    </location>
</feature>
<comment type="function">
    <text evidence="4">Involved in the biosynthesis of pyridine alkaloid natural products, leading mainly to the production of anabasine, anatabine, nicotine and nornicotine, effective deterrents against herbivores with antiparasitic and pesticide properties (neurotoxins); nornicotine serves as the precursor in the synthesis of the carcinogen compound N'-nitrosonornicotine (NNN) (PubMed:17102129). Catalyzes the demethylation of nicotine to form nornicotine (PubMed:17102129).</text>
</comment>
<comment type="catalytic activity">
    <reaction evidence="4">
        <text>(S)-nicotine + reduced [NADPH--hemoprotein reductase] + O2 = (S)-nornicotine + formaldehyde + oxidized [NADPH--hemoprotein reductase] + H2O + H(+)</text>
        <dbReference type="Rhea" id="RHEA:70999"/>
        <dbReference type="Rhea" id="RHEA-COMP:11964"/>
        <dbReference type="Rhea" id="RHEA-COMP:11965"/>
        <dbReference type="ChEBI" id="CHEBI:15377"/>
        <dbReference type="ChEBI" id="CHEBI:15378"/>
        <dbReference type="ChEBI" id="CHEBI:15379"/>
        <dbReference type="ChEBI" id="CHEBI:16842"/>
        <dbReference type="ChEBI" id="CHEBI:57618"/>
        <dbReference type="ChEBI" id="CHEBI:58210"/>
        <dbReference type="ChEBI" id="CHEBI:59806"/>
        <dbReference type="ChEBI" id="CHEBI:190184"/>
    </reaction>
    <physiologicalReaction direction="left-to-right" evidence="4">
        <dbReference type="Rhea" id="RHEA:71000"/>
    </physiologicalReaction>
</comment>
<comment type="cofactor">
    <cofactor evidence="1">
        <name>heme</name>
        <dbReference type="ChEBI" id="CHEBI:30413"/>
    </cofactor>
</comment>
<comment type="biophysicochemical properties">
    <kinetics>
        <KM evidence="4">48.1 uM for nicotine</KM>
        <Vmax evidence="4">7.1 nmol/min/mg enzyme with nicotine as substrate</Vmax>
    </kinetics>
</comment>
<comment type="pathway">
    <text evidence="4">Alkaloid biosynthesis; nicotine biosynthesis.</text>
</comment>
<comment type="subcellular location">
    <subcellularLocation>
        <location evidence="3">Membrane</location>
        <topology evidence="3">Single-pass membrane protein</topology>
    </subcellularLocation>
</comment>
<comment type="tissue specificity">
    <text evidence="4">Expressed in leaves.</text>
</comment>
<comment type="developmental stage">
    <text evidence="4">Highly expressed in green leaves but rapidly fades out during senescence.</text>
</comment>
<comment type="similarity">
    <text evidence="6">Belongs to the cytochrome P450 family. CYP82E2 subfamily.</text>
</comment>
<protein>
    <recommendedName>
        <fullName evidence="5">Nicotine N-demethylase CYP82E3</fullName>
        <shortName evidence="5">NND</shortName>
        <ecNumber evidence="4">1.14.14.-</ecNumber>
    </recommendedName>
    <alternativeName>
        <fullName evidence="5">Cytochrome P450 82E3</fullName>
        <shortName evidence="5">NtomCYP82E3</shortName>
    </alternativeName>
</protein>